<protein>
    <recommendedName>
        <fullName>UPF0053 protein MT1890</fullName>
    </recommendedName>
</protein>
<gene>
    <name type="ordered locus">MT1890</name>
</gene>
<sequence length="455" mass="48154">MNLTDTVATILAILALTAGTGVFVAAEFSLTALDRSTVEANARGGTSRDRFIQRAHHRLSFQLSGAQLGISITTLATGYLTEPLVAELPHPGLVAVGMSDRVADGLITFFALVIVTSLSMVFGELVPKYLAVARPLRTARSVVAGQVLFSLLLTPAIRLTNGAANWIVRRLGIEPAEELRSARTPQELVSLVRSSARSGALDDATAWLMRRSLQFGALTAEELMTPRSKIVALQTDDTIADLVAAAAASGFSRFPVVEGDLDATVGIVHVKQVFEVPPGDRAHTLLTTVAEPVAVVPSTLDGDAVMAQVRASALQTAMVVDEYGGTAGMVTLEDLIEEIVGDVRDEHDDATPDVVAAGNGWRVSGLLRIDEVASATGYRAPDGPYETISGLVLRELGHIPVAGETVELTALDQDGLPDDSMRWLATVIQMDGRRIDLLELIKMGGHADPGSGRGR</sequence>
<feature type="chain" id="PRO_0000428504" description="UPF0053 protein MT1890">
    <location>
        <begin position="1"/>
        <end position="455"/>
    </location>
</feature>
<feature type="transmembrane region" description="Helical" evidence="1">
    <location>
        <begin position="6"/>
        <end position="26"/>
    </location>
</feature>
<feature type="transmembrane region" description="Helical" evidence="1">
    <location>
        <begin position="68"/>
        <end position="88"/>
    </location>
</feature>
<feature type="transmembrane region" description="Helical" evidence="1">
    <location>
        <begin position="106"/>
        <end position="126"/>
    </location>
</feature>
<feature type="transmembrane region" description="Helical" evidence="1">
    <location>
        <begin position="148"/>
        <end position="168"/>
    </location>
</feature>
<feature type="domain" description="CNNM transmembrane" evidence="3">
    <location>
        <begin position="2"/>
        <end position="205"/>
    </location>
</feature>
<feature type="domain" description="CBS 1" evidence="2">
    <location>
        <begin position="224"/>
        <end position="285"/>
    </location>
</feature>
<feature type="domain" description="CBS 2" evidence="2">
    <location>
        <begin position="286"/>
        <end position="346"/>
    </location>
</feature>
<reference key="1">
    <citation type="journal article" date="2002" name="J. Bacteriol.">
        <title>Whole-genome comparison of Mycobacterium tuberculosis clinical and laboratory strains.</title>
        <authorList>
            <person name="Fleischmann R.D."/>
            <person name="Alland D."/>
            <person name="Eisen J.A."/>
            <person name="Carpenter L."/>
            <person name="White O."/>
            <person name="Peterson J.D."/>
            <person name="DeBoy R.T."/>
            <person name="Dodson R.J."/>
            <person name="Gwinn M.L."/>
            <person name="Haft D.H."/>
            <person name="Hickey E.K."/>
            <person name="Kolonay J.F."/>
            <person name="Nelson W.C."/>
            <person name="Umayam L.A."/>
            <person name="Ermolaeva M.D."/>
            <person name="Salzberg S.L."/>
            <person name="Delcher A."/>
            <person name="Utterback T.R."/>
            <person name="Weidman J.F."/>
            <person name="Khouri H.M."/>
            <person name="Gill J."/>
            <person name="Mikula A."/>
            <person name="Bishai W."/>
            <person name="Jacobs W.R. Jr."/>
            <person name="Venter J.C."/>
            <person name="Fraser C.M."/>
        </authorList>
    </citation>
    <scope>NUCLEOTIDE SEQUENCE [LARGE SCALE GENOMIC DNA]</scope>
    <source>
        <strain>CDC 1551 / Oshkosh</strain>
    </source>
</reference>
<organism>
    <name type="scientific">Mycobacterium tuberculosis (strain CDC 1551 / Oshkosh)</name>
    <dbReference type="NCBI Taxonomy" id="83331"/>
    <lineage>
        <taxon>Bacteria</taxon>
        <taxon>Bacillati</taxon>
        <taxon>Actinomycetota</taxon>
        <taxon>Actinomycetes</taxon>
        <taxon>Mycobacteriales</taxon>
        <taxon>Mycobacteriaceae</taxon>
        <taxon>Mycobacterium</taxon>
        <taxon>Mycobacterium tuberculosis complex</taxon>
    </lineage>
</organism>
<evidence type="ECO:0000255" key="1"/>
<evidence type="ECO:0000255" key="2">
    <source>
        <dbReference type="PROSITE-ProRule" id="PRU00703"/>
    </source>
</evidence>
<evidence type="ECO:0000255" key="3">
    <source>
        <dbReference type="PROSITE-ProRule" id="PRU01193"/>
    </source>
</evidence>
<evidence type="ECO:0000305" key="4"/>
<name>Y1842_MYCTO</name>
<accession>P9WFP2</accession>
<accession>L0T820</accession>
<accession>P95166</accession>
<accession>Q50592</accession>
<proteinExistence type="inferred from homology"/>
<comment type="subcellular location">
    <subcellularLocation>
        <location evidence="4">Cell membrane</location>
        <topology evidence="4">Multi-pass membrane protein</topology>
    </subcellularLocation>
</comment>
<comment type="similarity">
    <text evidence="4">Belongs to the UPF0053 family.</text>
</comment>
<keyword id="KW-0129">CBS domain</keyword>
<keyword id="KW-1003">Cell membrane</keyword>
<keyword id="KW-0472">Membrane</keyword>
<keyword id="KW-1185">Reference proteome</keyword>
<keyword id="KW-0677">Repeat</keyword>
<keyword id="KW-0812">Transmembrane</keyword>
<keyword id="KW-1133">Transmembrane helix</keyword>
<dbReference type="EMBL" id="AE000516">
    <property type="protein sequence ID" value="AAK46161.1"/>
    <property type="molecule type" value="Genomic_DNA"/>
</dbReference>
<dbReference type="PIR" id="B70664">
    <property type="entry name" value="B70664"/>
</dbReference>
<dbReference type="RefSeq" id="WP_003917539.1">
    <property type="nucleotide sequence ID" value="NZ_KK341227.1"/>
</dbReference>
<dbReference type="RefSeq" id="WP_010924451.1">
    <property type="nucleotide sequence ID" value="NC_002755.2"/>
</dbReference>
<dbReference type="SMR" id="P9WFP2"/>
<dbReference type="KEGG" id="mtc:MT1890"/>
<dbReference type="PATRIC" id="fig|83331.31.peg.2034"/>
<dbReference type="HOGENOM" id="CLU_015237_4_0_11"/>
<dbReference type="Proteomes" id="UP000001020">
    <property type="component" value="Chromosome"/>
</dbReference>
<dbReference type="GO" id="GO:0005886">
    <property type="term" value="C:plasma membrane"/>
    <property type="evidence" value="ECO:0007669"/>
    <property type="project" value="UniProtKB-SubCell"/>
</dbReference>
<dbReference type="GO" id="GO:0050660">
    <property type="term" value="F:flavin adenine dinucleotide binding"/>
    <property type="evidence" value="ECO:0007669"/>
    <property type="project" value="InterPro"/>
</dbReference>
<dbReference type="CDD" id="cd04590">
    <property type="entry name" value="CBS_pair_CorC_HlyC_assoc"/>
    <property type="match status" value="1"/>
</dbReference>
<dbReference type="Gene3D" id="3.30.465.10">
    <property type="match status" value="1"/>
</dbReference>
<dbReference type="Gene3D" id="3.10.580.10">
    <property type="entry name" value="CBS-domain"/>
    <property type="match status" value="1"/>
</dbReference>
<dbReference type="InterPro" id="IPR000644">
    <property type="entry name" value="CBS_dom"/>
</dbReference>
<dbReference type="InterPro" id="IPR046342">
    <property type="entry name" value="CBS_dom_sf"/>
</dbReference>
<dbReference type="InterPro" id="IPR002550">
    <property type="entry name" value="CNNM"/>
</dbReference>
<dbReference type="InterPro" id="IPR036318">
    <property type="entry name" value="FAD-bd_PCMH-like_sf"/>
</dbReference>
<dbReference type="InterPro" id="IPR016169">
    <property type="entry name" value="FAD-bd_PCMH_sub2"/>
</dbReference>
<dbReference type="InterPro" id="IPR044751">
    <property type="entry name" value="Ion_transp-like_CBS"/>
</dbReference>
<dbReference type="InterPro" id="IPR005170">
    <property type="entry name" value="Transptr-assoc_dom"/>
</dbReference>
<dbReference type="InterPro" id="IPR051676">
    <property type="entry name" value="UPF0053_domain"/>
</dbReference>
<dbReference type="PANTHER" id="PTHR43099:SF6">
    <property type="entry name" value="UPF0053 PROTEIN RV1842C"/>
    <property type="match status" value="1"/>
</dbReference>
<dbReference type="PANTHER" id="PTHR43099">
    <property type="entry name" value="UPF0053 PROTEIN YRKA"/>
    <property type="match status" value="1"/>
</dbReference>
<dbReference type="Pfam" id="PF00571">
    <property type="entry name" value="CBS"/>
    <property type="match status" value="2"/>
</dbReference>
<dbReference type="Pfam" id="PF01595">
    <property type="entry name" value="CNNM"/>
    <property type="match status" value="1"/>
</dbReference>
<dbReference type="Pfam" id="PF03471">
    <property type="entry name" value="CorC_HlyC"/>
    <property type="match status" value="1"/>
</dbReference>
<dbReference type="SMART" id="SM01091">
    <property type="entry name" value="CorC_HlyC"/>
    <property type="match status" value="1"/>
</dbReference>
<dbReference type="SUPFAM" id="SSF54631">
    <property type="entry name" value="CBS-domain pair"/>
    <property type="match status" value="1"/>
</dbReference>
<dbReference type="SUPFAM" id="SSF56176">
    <property type="entry name" value="FAD-binding/transporter-associated domain-like"/>
    <property type="match status" value="1"/>
</dbReference>
<dbReference type="PROSITE" id="PS51371">
    <property type="entry name" value="CBS"/>
    <property type="match status" value="2"/>
</dbReference>
<dbReference type="PROSITE" id="PS51846">
    <property type="entry name" value="CNNM"/>
    <property type="match status" value="1"/>
</dbReference>